<protein>
    <recommendedName>
        <fullName evidence="1">Adenine deaminase</fullName>
        <shortName evidence="1">ADE</shortName>
        <ecNumber evidence="1">3.5.4.2</ecNumber>
    </recommendedName>
    <alternativeName>
        <fullName evidence="1">Adenine aminohydrolase</fullName>
        <shortName evidence="1">AAH</shortName>
    </alternativeName>
</protein>
<sequence length="317" mass="36118">MYDWLNALPKAELHLHLEGSLEPELLFALAERNRIALPWNDVEALRKAYAFNNLQEFLDLYYRGADVLRTEQDFYDLTWAYLLRCKEQNVIHTEPFFDPQTHTDRGIAFEVVLAGITGALKDGKSKLGVDSGLILSFLRHLSEDEAEKTLDQALPFRDAFVAVGLDSSEMGHPPSKFQRVFDRARNEGFLTVAHAGEEGPPEYIWEALDLLKIQRIDHGVRAIEDERLMQRIIDEQIPLTVCPLSNTKLCVFDDMAQHNILDMLERGVKVTVNSDDPAYFGGYVTENFHALHTHLGMTEDQARRLAQNSLDARLVKP</sequence>
<organism>
    <name type="scientific">Pseudomonas syringae pv. tomato (strain ATCC BAA-871 / DC3000)</name>
    <dbReference type="NCBI Taxonomy" id="223283"/>
    <lineage>
        <taxon>Bacteria</taxon>
        <taxon>Pseudomonadati</taxon>
        <taxon>Pseudomonadota</taxon>
        <taxon>Gammaproteobacteria</taxon>
        <taxon>Pseudomonadales</taxon>
        <taxon>Pseudomonadaceae</taxon>
        <taxon>Pseudomonas</taxon>
    </lineage>
</organism>
<name>ADE_PSESM</name>
<proteinExistence type="inferred from homology"/>
<keyword id="KW-0378">Hydrolase</keyword>
<keyword id="KW-0479">Metal-binding</keyword>
<keyword id="KW-0546">Nucleotide metabolism</keyword>
<keyword id="KW-1185">Reference proteome</keyword>
<keyword id="KW-0862">Zinc</keyword>
<reference key="1">
    <citation type="journal article" date="2003" name="Proc. Natl. Acad. Sci. U.S.A.">
        <title>The complete genome sequence of the Arabidopsis and tomato pathogen Pseudomonas syringae pv. tomato DC3000.</title>
        <authorList>
            <person name="Buell C.R."/>
            <person name="Joardar V."/>
            <person name="Lindeberg M."/>
            <person name="Selengut J."/>
            <person name="Paulsen I.T."/>
            <person name="Gwinn M.L."/>
            <person name="Dodson R.J."/>
            <person name="DeBoy R.T."/>
            <person name="Durkin A.S."/>
            <person name="Kolonay J.F."/>
            <person name="Madupu R."/>
            <person name="Daugherty S.C."/>
            <person name="Brinkac L.M."/>
            <person name="Beanan M.J."/>
            <person name="Haft D.H."/>
            <person name="Nelson W.C."/>
            <person name="Davidsen T.M."/>
            <person name="Zafar N."/>
            <person name="Zhou L."/>
            <person name="Liu J."/>
            <person name="Yuan Q."/>
            <person name="Khouri H.M."/>
            <person name="Fedorova N.B."/>
            <person name="Tran B."/>
            <person name="Russell D."/>
            <person name="Berry K.J."/>
            <person name="Utterback T.R."/>
            <person name="Van Aken S.E."/>
            <person name="Feldblyum T.V."/>
            <person name="D'Ascenzo M."/>
            <person name="Deng W.-L."/>
            <person name="Ramos A.R."/>
            <person name="Alfano J.R."/>
            <person name="Cartinhour S."/>
            <person name="Chatterjee A.K."/>
            <person name="Delaney T.P."/>
            <person name="Lazarowitz S.G."/>
            <person name="Martin G.B."/>
            <person name="Schneider D.J."/>
            <person name="Tang X."/>
            <person name="Bender C.L."/>
            <person name="White O."/>
            <person name="Fraser C.M."/>
            <person name="Collmer A."/>
        </authorList>
    </citation>
    <scope>NUCLEOTIDE SEQUENCE [LARGE SCALE GENOMIC DNA]</scope>
    <source>
        <strain>ATCC BAA-871 / DC3000</strain>
    </source>
</reference>
<comment type="function">
    <text evidence="1">Catalyzes the hydrolytic deamination of adenine to hypoxanthine. Plays an important role in the purine salvage pathway and in nitrogen catabolism.</text>
</comment>
<comment type="catalytic activity">
    <reaction evidence="1">
        <text>adenine + H2O + H(+) = hypoxanthine + NH4(+)</text>
        <dbReference type="Rhea" id="RHEA:23688"/>
        <dbReference type="ChEBI" id="CHEBI:15377"/>
        <dbReference type="ChEBI" id="CHEBI:15378"/>
        <dbReference type="ChEBI" id="CHEBI:16708"/>
        <dbReference type="ChEBI" id="CHEBI:17368"/>
        <dbReference type="ChEBI" id="CHEBI:28938"/>
        <dbReference type="EC" id="3.5.4.2"/>
    </reaction>
</comment>
<comment type="cofactor">
    <cofactor evidence="1">
        <name>Zn(2+)</name>
        <dbReference type="ChEBI" id="CHEBI:29105"/>
    </cofactor>
    <text evidence="1">Binds 1 zinc ion per subunit.</text>
</comment>
<comment type="similarity">
    <text evidence="1">Belongs to the metallo-dependent hydrolases superfamily. Adenosine and AMP deaminases family. Adenine deaminase type 2 subfamily.</text>
</comment>
<dbReference type="EC" id="3.5.4.2" evidence="1"/>
<dbReference type="EMBL" id="AE016853">
    <property type="protein sequence ID" value="AAO54299.1"/>
    <property type="molecule type" value="Genomic_DNA"/>
</dbReference>
<dbReference type="RefSeq" id="NP_790604.1">
    <property type="nucleotide sequence ID" value="NC_004578.1"/>
</dbReference>
<dbReference type="RefSeq" id="WP_005614495.1">
    <property type="nucleotide sequence ID" value="NC_004578.1"/>
</dbReference>
<dbReference type="SMR" id="Q889J2"/>
<dbReference type="STRING" id="223283.PSPTO_0757"/>
<dbReference type="KEGG" id="pst:PSPTO_0757"/>
<dbReference type="PATRIC" id="fig|223283.9.peg.765"/>
<dbReference type="eggNOG" id="COG1816">
    <property type="taxonomic scope" value="Bacteria"/>
</dbReference>
<dbReference type="HOGENOM" id="CLU_039228_7_0_6"/>
<dbReference type="OrthoDB" id="105475at2"/>
<dbReference type="PhylomeDB" id="Q889J2"/>
<dbReference type="Proteomes" id="UP000002515">
    <property type="component" value="Chromosome"/>
</dbReference>
<dbReference type="GO" id="GO:0005829">
    <property type="term" value="C:cytosol"/>
    <property type="evidence" value="ECO:0007669"/>
    <property type="project" value="TreeGrafter"/>
</dbReference>
<dbReference type="GO" id="GO:0000034">
    <property type="term" value="F:adenine deaminase activity"/>
    <property type="evidence" value="ECO:0007669"/>
    <property type="project" value="UniProtKB-UniRule"/>
</dbReference>
<dbReference type="GO" id="GO:0008270">
    <property type="term" value="F:zinc ion binding"/>
    <property type="evidence" value="ECO:0007669"/>
    <property type="project" value="UniProtKB-UniRule"/>
</dbReference>
<dbReference type="GO" id="GO:0006146">
    <property type="term" value="P:adenine catabolic process"/>
    <property type="evidence" value="ECO:0007669"/>
    <property type="project" value="UniProtKB-UniRule"/>
</dbReference>
<dbReference type="GO" id="GO:0043103">
    <property type="term" value="P:hypoxanthine salvage"/>
    <property type="evidence" value="ECO:0007669"/>
    <property type="project" value="UniProtKB-UniRule"/>
</dbReference>
<dbReference type="GO" id="GO:0009117">
    <property type="term" value="P:nucleotide metabolic process"/>
    <property type="evidence" value="ECO:0007669"/>
    <property type="project" value="UniProtKB-KW"/>
</dbReference>
<dbReference type="CDD" id="cd01320">
    <property type="entry name" value="ADA"/>
    <property type="match status" value="1"/>
</dbReference>
<dbReference type="FunFam" id="3.20.20.140:FF:000039">
    <property type="entry name" value="Adenine deaminase"/>
    <property type="match status" value="1"/>
</dbReference>
<dbReference type="Gene3D" id="3.20.20.140">
    <property type="entry name" value="Metal-dependent hydrolases"/>
    <property type="match status" value="1"/>
</dbReference>
<dbReference type="HAMAP" id="MF_01962">
    <property type="entry name" value="Adenine_deaminase"/>
    <property type="match status" value="1"/>
</dbReference>
<dbReference type="InterPro" id="IPR001365">
    <property type="entry name" value="A_deaminase_dom"/>
</dbReference>
<dbReference type="InterPro" id="IPR028892">
    <property type="entry name" value="ADE"/>
</dbReference>
<dbReference type="InterPro" id="IPR006330">
    <property type="entry name" value="Ado/ade_deaminase"/>
</dbReference>
<dbReference type="InterPro" id="IPR032466">
    <property type="entry name" value="Metal_Hydrolase"/>
</dbReference>
<dbReference type="NCBIfam" id="TIGR01430">
    <property type="entry name" value="aden_deam"/>
    <property type="match status" value="1"/>
</dbReference>
<dbReference type="NCBIfam" id="NF006850">
    <property type="entry name" value="PRK09358.1-6"/>
    <property type="match status" value="1"/>
</dbReference>
<dbReference type="PANTHER" id="PTHR43114">
    <property type="entry name" value="ADENINE DEAMINASE"/>
    <property type="match status" value="1"/>
</dbReference>
<dbReference type="PANTHER" id="PTHR43114:SF6">
    <property type="entry name" value="ADENINE DEAMINASE"/>
    <property type="match status" value="1"/>
</dbReference>
<dbReference type="Pfam" id="PF00962">
    <property type="entry name" value="A_deaminase"/>
    <property type="match status" value="1"/>
</dbReference>
<dbReference type="SUPFAM" id="SSF51556">
    <property type="entry name" value="Metallo-dependent hydrolases"/>
    <property type="match status" value="1"/>
</dbReference>
<evidence type="ECO:0000255" key="1">
    <source>
        <dbReference type="HAMAP-Rule" id="MF_01962"/>
    </source>
</evidence>
<accession>Q889J2</accession>
<gene>
    <name type="ordered locus">PSPTO_0757</name>
</gene>
<feature type="chain" id="PRO_0000194379" description="Adenine deaminase">
    <location>
        <begin position="1"/>
        <end position="317"/>
    </location>
</feature>
<feature type="active site" description="Proton donor" evidence="1">
    <location>
        <position position="197"/>
    </location>
</feature>
<feature type="binding site" evidence="1">
    <location>
        <position position="14"/>
    </location>
    <ligand>
        <name>Zn(2+)</name>
        <dbReference type="ChEBI" id="CHEBI:29105"/>
        <note>catalytic</note>
    </ligand>
</feature>
<feature type="binding site" evidence="1">
    <location>
        <position position="16"/>
    </location>
    <ligand>
        <name>Zn(2+)</name>
        <dbReference type="ChEBI" id="CHEBI:29105"/>
        <note>catalytic</note>
    </ligand>
</feature>
<feature type="binding site" evidence="1">
    <location>
        <position position="194"/>
    </location>
    <ligand>
        <name>Zn(2+)</name>
        <dbReference type="ChEBI" id="CHEBI:29105"/>
        <note>catalytic</note>
    </ligand>
</feature>
<feature type="binding site" evidence="1">
    <location>
        <position position="275"/>
    </location>
    <ligand>
        <name>Zn(2+)</name>
        <dbReference type="ChEBI" id="CHEBI:29105"/>
        <note>catalytic</note>
    </ligand>
</feature>
<feature type="binding site" evidence="1">
    <location>
        <position position="276"/>
    </location>
    <ligand>
        <name>substrate</name>
    </ligand>
</feature>
<feature type="site" description="Important for catalytic activity" evidence="1">
    <location>
        <position position="218"/>
    </location>
</feature>